<keyword id="KW-1003">Cell membrane</keyword>
<keyword id="KW-0963">Cytoplasm</keyword>
<keyword id="KW-0297">G-protein coupled receptor</keyword>
<keyword id="KW-0325">Glycoprotein</keyword>
<keyword id="KW-0449">Lipoprotein</keyword>
<keyword id="KW-0472">Membrane</keyword>
<keyword id="KW-0539">Nucleus</keyword>
<keyword id="KW-0564">Palmitate</keyword>
<keyword id="KW-0675">Receptor</keyword>
<keyword id="KW-1185">Reference proteome</keyword>
<keyword id="KW-0807">Transducer</keyword>
<keyword id="KW-0812">Transmembrane</keyword>
<keyword id="KW-1133">Transmembrane helix</keyword>
<comment type="function">
    <text evidence="1">This alpha-adrenergic receptor mediates its action by association with G proteins that activate a phosphatidylinositol-calcium second messenger system. Its effect is mediated by G(q) and G(11) proteins. Nuclear ADRA1A-ADRA1B heterooligomers regulate phenylephrine (PE)-stimulated ERK signaling in cardiac myocytes (By similarity).</text>
</comment>
<comment type="subunit">
    <text evidence="2">Homo- and heterooligomer. Heterooligomerizes with ADRA1B homooligomers in cardiac myocytes. Interacts with CAVIN4.</text>
</comment>
<comment type="subcellular location">
    <subcellularLocation>
        <location>Nucleus membrane</location>
        <topology>Multi-pass membrane protein</topology>
    </subcellularLocation>
    <subcellularLocation>
        <location evidence="2">Cell membrane</location>
        <topology evidence="3">Multi-pass membrane protein</topology>
    </subcellularLocation>
    <subcellularLocation>
        <location evidence="2">Cytoplasm</location>
    </subcellularLocation>
    <subcellularLocation>
        <location evidence="2">Membrane</location>
        <location evidence="2">Caveola</location>
    </subcellularLocation>
    <text evidence="1">Location at the nuclear membrane facilitates heterooligomerization and regulates ERK-mediated signaling in cardiac myocytes. Colocalizes with GNAQ, PLCB1 as well as LAP2 at the nuclear membrane of cardiac myocytes (By similarity).</text>
</comment>
<comment type="similarity">
    <text evidence="4">Belongs to the G-protein coupled receptor 1 family. Adrenergic receptor subfamily. ADRA1A sub-subfamily.</text>
</comment>
<sequence>MVFLSGNASDSSNCTQPPAPVNIPKAILLGVILGVLILFGVPGNILVILSVACHRHLHSVTHYYIVNLAVADLLLTSTVLPFSAIFEILGYWAFGRVFCNIWAAVDVLCCTASIMSLCIISIDRYIGVSYPLRYPTIVTQRRGLRALLCLWALSLVISIGPLFGWRQPAPQDETICQINEDPSYVLFSALGSFYVPLAIILVMYCRVYVVAKRESRGLTSGLKTDKSDSEQVTLRIHRKNAPLGGSGVASSKNKTHFSVRLLKFSREKKAAKTLGIVVGCFVLCWLPFFLVMPIGSFFPDFKPSETVFKIVFWLGYLNSCINPIIYPCSSQEFKKAFQNVLKIQCLRRKQSSKHALGYTLHPPSQAVEGQHKDMVRIPVGSRETFYKISKTDGVCEWKFFSSMPRGSARITVPKDQSACTTARVRSKSFLQVCCCVGPSTPNPGENHQVPTIKIHTISLSENGEEV</sequence>
<protein>
    <recommendedName>
        <fullName>Alpha-1A adrenergic receptor</fullName>
    </recommendedName>
    <alternativeName>
        <fullName>Alpha-1A adrenoreceptor</fullName>
        <shortName>Alpha-1A adrenoceptor</shortName>
    </alternativeName>
    <alternativeName>
        <fullName>Alpha-1C adrenergic receptor</fullName>
    </alternativeName>
</protein>
<reference key="1">
    <citation type="journal article" date="2001" name="Eur. J. Pharmacol.">
        <title>Molecular cloning and functional expression of the guinea pig alpha(1a)-adrenoceptor.</title>
        <authorList>
            <person name="Gonzalez-Espinosa C."/>
            <person name="Romero-Avila M.T."/>
            <person name="Mora-Rodriguez D.M."/>
            <person name="Gonzalez-Espinosa D."/>
            <person name="Garcia-Sainz J.A."/>
        </authorList>
    </citation>
    <scope>NUCLEOTIDE SEQUENCE [MRNA]</scope>
    <source>
        <tissue>Liver</tissue>
    </source>
</reference>
<organism>
    <name type="scientific">Cavia porcellus</name>
    <name type="common">Guinea pig</name>
    <dbReference type="NCBI Taxonomy" id="10141"/>
    <lineage>
        <taxon>Eukaryota</taxon>
        <taxon>Metazoa</taxon>
        <taxon>Chordata</taxon>
        <taxon>Craniata</taxon>
        <taxon>Vertebrata</taxon>
        <taxon>Euteleostomi</taxon>
        <taxon>Mammalia</taxon>
        <taxon>Eutheria</taxon>
        <taxon>Euarchontoglires</taxon>
        <taxon>Glires</taxon>
        <taxon>Rodentia</taxon>
        <taxon>Hystricomorpha</taxon>
        <taxon>Caviidae</taxon>
        <taxon>Cavia</taxon>
    </lineage>
</organism>
<evidence type="ECO:0000250" key="1"/>
<evidence type="ECO:0000250" key="2">
    <source>
        <dbReference type="UniProtKB" id="P35348"/>
    </source>
</evidence>
<evidence type="ECO:0000255" key="3"/>
<evidence type="ECO:0000255" key="4">
    <source>
        <dbReference type="PROSITE-ProRule" id="PRU00521"/>
    </source>
</evidence>
<gene>
    <name type="primary">ADRA1A</name>
</gene>
<proteinExistence type="evidence at transcript level"/>
<accession>Q9WU25</accession>
<feature type="chain" id="PRO_0000069062" description="Alpha-1A adrenergic receptor">
    <location>
        <begin position="1"/>
        <end position="466"/>
    </location>
</feature>
<feature type="topological domain" description="Extracellular" evidence="1">
    <location>
        <begin position="1"/>
        <end position="25"/>
    </location>
</feature>
<feature type="transmembrane region" description="Helical; Name=1" evidence="1">
    <location>
        <begin position="26"/>
        <end position="51"/>
    </location>
</feature>
<feature type="topological domain" description="Cytoplasmic" evidence="1">
    <location>
        <begin position="52"/>
        <end position="63"/>
    </location>
</feature>
<feature type="transmembrane region" description="Helical; Name=2" evidence="1">
    <location>
        <begin position="64"/>
        <end position="89"/>
    </location>
</feature>
<feature type="topological domain" description="Extracellular" evidence="1">
    <location>
        <begin position="90"/>
        <end position="99"/>
    </location>
</feature>
<feature type="transmembrane region" description="Helical; Name=3" evidence="1">
    <location>
        <begin position="100"/>
        <end position="122"/>
    </location>
</feature>
<feature type="topological domain" description="Cytoplasmic" evidence="1">
    <location>
        <begin position="123"/>
        <end position="143"/>
    </location>
</feature>
<feature type="transmembrane region" description="Helical; Name=4" evidence="1">
    <location>
        <begin position="144"/>
        <end position="168"/>
    </location>
</feature>
<feature type="topological domain" description="Extracellular" evidence="1">
    <location>
        <begin position="169"/>
        <end position="181"/>
    </location>
</feature>
<feature type="transmembrane region" description="Helical; Name=5" evidence="1">
    <location>
        <begin position="182"/>
        <end position="205"/>
    </location>
</feature>
<feature type="topological domain" description="Cytoplasmic" evidence="1">
    <location>
        <begin position="206"/>
        <end position="272"/>
    </location>
</feature>
<feature type="transmembrane region" description="Helical; Name=6" evidence="1">
    <location>
        <begin position="273"/>
        <end position="297"/>
    </location>
</feature>
<feature type="topological domain" description="Extracellular" evidence="1">
    <location>
        <begin position="298"/>
        <end position="304"/>
    </location>
</feature>
<feature type="transmembrane region" description="Helical; Name=7" evidence="1">
    <location>
        <begin position="305"/>
        <end position="329"/>
    </location>
</feature>
<feature type="topological domain" description="Cytoplasmic" evidence="1">
    <location>
        <begin position="330"/>
        <end position="466"/>
    </location>
</feature>
<feature type="short sequence motif" description="Nuclear localization signal" evidence="1">
    <location>
        <begin position="334"/>
        <end position="349"/>
    </location>
</feature>
<feature type="lipid moiety-binding region" description="S-palmitoyl cysteine" evidence="3">
    <location>
        <position position="345"/>
    </location>
</feature>
<feature type="glycosylation site" description="N-linked (GlcNAc...) asparagine" evidence="3">
    <location>
        <position position="7"/>
    </location>
</feature>
<feature type="glycosylation site" description="N-linked (GlcNAc...) asparagine" evidence="3">
    <location>
        <position position="13"/>
    </location>
</feature>
<dbReference type="EMBL" id="AF108016">
    <property type="protein sequence ID" value="AAD22540.2"/>
    <property type="molecule type" value="mRNA"/>
</dbReference>
<dbReference type="RefSeq" id="NP_001166383.1">
    <property type="nucleotide sequence ID" value="NM_001172912.1"/>
</dbReference>
<dbReference type="SMR" id="Q9WU25"/>
<dbReference type="FunCoup" id="Q9WU25">
    <property type="interactions" value="1092"/>
</dbReference>
<dbReference type="STRING" id="10141.ENSCPOP00000031190"/>
<dbReference type="BindingDB" id="Q9WU25"/>
<dbReference type="ChEMBL" id="CHEMBL2150843"/>
<dbReference type="GlyCosmos" id="Q9WU25">
    <property type="glycosylation" value="2 sites, No reported glycans"/>
</dbReference>
<dbReference type="GeneID" id="100135474"/>
<dbReference type="CTD" id="148"/>
<dbReference type="eggNOG" id="KOG3656">
    <property type="taxonomic scope" value="Eukaryota"/>
</dbReference>
<dbReference type="InParanoid" id="Q9WU25"/>
<dbReference type="OrthoDB" id="6358729at2759"/>
<dbReference type="PRO" id="PR:Q9WU25"/>
<dbReference type="Proteomes" id="UP000005447">
    <property type="component" value="Unassembled WGS sequence"/>
</dbReference>
<dbReference type="GO" id="GO:0005901">
    <property type="term" value="C:caveola"/>
    <property type="evidence" value="ECO:0007669"/>
    <property type="project" value="UniProtKB-SubCell"/>
</dbReference>
<dbReference type="GO" id="GO:0005737">
    <property type="term" value="C:cytoplasm"/>
    <property type="evidence" value="ECO:0000250"/>
    <property type="project" value="UniProtKB"/>
</dbReference>
<dbReference type="GO" id="GO:0031965">
    <property type="term" value="C:nuclear membrane"/>
    <property type="evidence" value="ECO:0000250"/>
    <property type="project" value="UniProtKB"/>
</dbReference>
<dbReference type="GO" id="GO:0005634">
    <property type="term" value="C:nucleus"/>
    <property type="evidence" value="ECO:0000250"/>
    <property type="project" value="UniProtKB"/>
</dbReference>
<dbReference type="GO" id="GO:0005886">
    <property type="term" value="C:plasma membrane"/>
    <property type="evidence" value="ECO:0000250"/>
    <property type="project" value="UniProtKB"/>
</dbReference>
<dbReference type="GO" id="GO:0004937">
    <property type="term" value="F:alpha1-adrenergic receptor activity"/>
    <property type="evidence" value="ECO:0007669"/>
    <property type="project" value="InterPro"/>
</dbReference>
<dbReference type="GO" id="GO:0046982">
    <property type="term" value="F:protein heterodimerization activity"/>
    <property type="evidence" value="ECO:0000250"/>
    <property type="project" value="UniProtKB"/>
</dbReference>
<dbReference type="GO" id="GO:0071880">
    <property type="term" value="P:adenylate cyclase-activating adrenergic receptor signaling pathway"/>
    <property type="evidence" value="ECO:0007669"/>
    <property type="project" value="TreeGrafter"/>
</dbReference>
<dbReference type="GO" id="GO:0007267">
    <property type="term" value="P:cell-cell signaling"/>
    <property type="evidence" value="ECO:0007669"/>
    <property type="project" value="TreeGrafter"/>
</dbReference>
<dbReference type="GO" id="GO:0007200">
    <property type="term" value="P:phospholipase C-activating G protein-coupled receptor signaling pathway"/>
    <property type="evidence" value="ECO:0007669"/>
    <property type="project" value="TreeGrafter"/>
</dbReference>
<dbReference type="GO" id="GO:0007204">
    <property type="term" value="P:positive regulation of cytosolic calcium ion concentration"/>
    <property type="evidence" value="ECO:0007669"/>
    <property type="project" value="TreeGrafter"/>
</dbReference>
<dbReference type="GO" id="GO:0043410">
    <property type="term" value="P:positive regulation of MAPK cascade"/>
    <property type="evidence" value="ECO:0000250"/>
    <property type="project" value="UniProtKB"/>
</dbReference>
<dbReference type="GO" id="GO:0055117">
    <property type="term" value="P:regulation of cardiac muscle contraction"/>
    <property type="evidence" value="ECO:0007669"/>
    <property type="project" value="InterPro"/>
</dbReference>
<dbReference type="GO" id="GO:0019229">
    <property type="term" value="P:regulation of vasoconstriction"/>
    <property type="evidence" value="ECO:0007669"/>
    <property type="project" value="InterPro"/>
</dbReference>
<dbReference type="CDD" id="cd15325">
    <property type="entry name" value="7tmA_alpha1A_AR"/>
    <property type="match status" value="1"/>
</dbReference>
<dbReference type="FunFam" id="1.20.1070.10:FF:000027">
    <property type="entry name" value="alpha-1A adrenergic receptor"/>
    <property type="match status" value="1"/>
</dbReference>
<dbReference type="Gene3D" id="1.20.1070.10">
    <property type="entry name" value="Rhodopsin 7-helix transmembrane proteins"/>
    <property type="match status" value="1"/>
</dbReference>
<dbReference type="InterPro" id="IPR002233">
    <property type="entry name" value="ADR_fam"/>
</dbReference>
<dbReference type="InterPro" id="IPR001004">
    <property type="entry name" value="ADRA1A_rcpt"/>
</dbReference>
<dbReference type="InterPro" id="IPR000276">
    <property type="entry name" value="GPCR_Rhodpsn"/>
</dbReference>
<dbReference type="InterPro" id="IPR017452">
    <property type="entry name" value="GPCR_Rhodpsn_7TM"/>
</dbReference>
<dbReference type="PANTHER" id="PTHR24248">
    <property type="entry name" value="ADRENERGIC RECEPTOR-RELATED G-PROTEIN COUPLED RECEPTOR"/>
    <property type="match status" value="1"/>
</dbReference>
<dbReference type="PANTHER" id="PTHR24248:SF16">
    <property type="entry name" value="ALPHA-1A ADRENERGIC RECEPTOR"/>
    <property type="match status" value="1"/>
</dbReference>
<dbReference type="Pfam" id="PF00001">
    <property type="entry name" value="7tm_1"/>
    <property type="match status" value="1"/>
</dbReference>
<dbReference type="PRINTS" id="PR01103">
    <property type="entry name" value="ADRENERGICR"/>
</dbReference>
<dbReference type="PRINTS" id="PR00557">
    <property type="entry name" value="ADRENRGCA1AR"/>
</dbReference>
<dbReference type="PRINTS" id="PR00237">
    <property type="entry name" value="GPCRRHODOPSN"/>
</dbReference>
<dbReference type="SMART" id="SM01381">
    <property type="entry name" value="7TM_GPCR_Srsx"/>
    <property type="match status" value="1"/>
</dbReference>
<dbReference type="SUPFAM" id="SSF81321">
    <property type="entry name" value="Family A G protein-coupled receptor-like"/>
    <property type="match status" value="1"/>
</dbReference>
<dbReference type="PROSITE" id="PS00237">
    <property type="entry name" value="G_PROTEIN_RECEP_F1_1"/>
    <property type="match status" value="1"/>
</dbReference>
<dbReference type="PROSITE" id="PS50262">
    <property type="entry name" value="G_PROTEIN_RECEP_F1_2"/>
    <property type="match status" value="1"/>
</dbReference>
<name>ADA1A_CAVPO</name>